<keyword id="KW-0687">Ribonucleoprotein</keyword>
<keyword id="KW-0689">Ribosomal protein</keyword>
<keyword id="KW-0694">RNA-binding</keyword>
<keyword id="KW-0699">rRNA-binding</keyword>
<accession>P36257</accession>
<proteinExistence type="inferred from homology"/>
<reference key="1">
    <citation type="journal article" date="1994" name="FEMS Microbiol. Lett.">
        <title>The nusG gene of Streptomyces griseus: cloning of the gene and analysis of the A-factor binding properties of the gene product.</title>
        <authorList>
            <person name="Kuberski S."/>
            <person name="Kasberg T."/>
            <person name="Distler J."/>
        </authorList>
    </citation>
    <scope>NUCLEOTIDE SEQUENCE [GENOMIC DNA]</scope>
    <source>
        <strain>N2-3-11</strain>
    </source>
</reference>
<dbReference type="EMBL" id="X72787">
    <property type="protein sequence ID" value="CAA51300.1"/>
    <property type="molecule type" value="Genomic_DNA"/>
</dbReference>
<dbReference type="PIR" id="S32238">
    <property type="entry name" value="S32238"/>
</dbReference>
<dbReference type="RefSeq" id="WP_003966997.1">
    <property type="nucleotide sequence ID" value="NZ_UAVD01000027.1"/>
</dbReference>
<dbReference type="SMR" id="P36257"/>
<dbReference type="STRING" id="1911.GCA_001715295_02333"/>
<dbReference type="GeneID" id="95484896"/>
<dbReference type="OMA" id="VRDQKQA"/>
<dbReference type="OrthoDB" id="3186107at2"/>
<dbReference type="GO" id="GO:0015934">
    <property type="term" value="C:large ribosomal subunit"/>
    <property type="evidence" value="ECO:0007669"/>
    <property type="project" value="InterPro"/>
</dbReference>
<dbReference type="GO" id="GO:0070180">
    <property type="term" value="F:large ribosomal subunit rRNA binding"/>
    <property type="evidence" value="ECO:0007669"/>
    <property type="project" value="UniProtKB-UniRule"/>
</dbReference>
<dbReference type="GO" id="GO:0003735">
    <property type="term" value="F:structural constituent of ribosome"/>
    <property type="evidence" value="ECO:0007669"/>
    <property type="project" value="InterPro"/>
</dbReference>
<dbReference type="GO" id="GO:0006412">
    <property type="term" value="P:translation"/>
    <property type="evidence" value="ECO:0007669"/>
    <property type="project" value="UniProtKB-UniRule"/>
</dbReference>
<dbReference type="CDD" id="cd05797">
    <property type="entry name" value="Ribosomal_L10"/>
    <property type="match status" value="1"/>
</dbReference>
<dbReference type="FunFam" id="3.30.70.1730:FF:000003">
    <property type="entry name" value="50S ribosomal protein L10"/>
    <property type="match status" value="1"/>
</dbReference>
<dbReference type="Gene3D" id="3.30.70.1730">
    <property type="match status" value="1"/>
</dbReference>
<dbReference type="Gene3D" id="6.10.250.290">
    <property type="match status" value="1"/>
</dbReference>
<dbReference type="HAMAP" id="MF_00362">
    <property type="entry name" value="Ribosomal_uL10"/>
    <property type="match status" value="1"/>
</dbReference>
<dbReference type="InterPro" id="IPR001790">
    <property type="entry name" value="Ribosomal_uL10"/>
</dbReference>
<dbReference type="InterPro" id="IPR043141">
    <property type="entry name" value="Ribosomal_uL10-like_sf"/>
</dbReference>
<dbReference type="InterPro" id="IPR022973">
    <property type="entry name" value="Ribosomal_uL10_bac"/>
</dbReference>
<dbReference type="InterPro" id="IPR047865">
    <property type="entry name" value="Ribosomal_uL10_bac_type"/>
</dbReference>
<dbReference type="InterPro" id="IPR002363">
    <property type="entry name" value="Ribosomal_uL10_CS_bac"/>
</dbReference>
<dbReference type="NCBIfam" id="NF000955">
    <property type="entry name" value="PRK00099.1-1"/>
    <property type="match status" value="1"/>
</dbReference>
<dbReference type="PANTHER" id="PTHR11560">
    <property type="entry name" value="39S RIBOSOMAL PROTEIN L10, MITOCHONDRIAL"/>
    <property type="match status" value="1"/>
</dbReference>
<dbReference type="Pfam" id="PF00466">
    <property type="entry name" value="Ribosomal_L10"/>
    <property type="match status" value="1"/>
</dbReference>
<dbReference type="SUPFAM" id="SSF160369">
    <property type="entry name" value="Ribosomal protein L10-like"/>
    <property type="match status" value="1"/>
</dbReference>
<dbReference type="PROSITE" id="PS01109">
    <property type="entry name" value="RIBOSOMAL_L10"/>
    <property type="match status" value="1"/>
</dbReference>
<protein>
    <recommendedName>
        <fullName evidence="3">Large ribosomal subunit protein uL10</fullName>
    </recommendedName>
    <alternativeName>
        <fullName>50S ribosomal protein L10</fullName>
    </alternativeName>
</protein>
<sequence>MARPDKAAAVAELTDQFRSSNAAVLTEYRGLTVAQLKELRRSLGENAQYAVVKNTLTKIAANEAGIDTLDDLFSGPTAVAFVTGDPVESAKGLRDFAKDNPNLIIKGGVLDGKALSADEIKKLADLESREVLLSKLAGAFKGKQTQAAQVFQALPSKFVRTAEALRAKKEEQGGAGTPAPAEAAE</sequence>
<feature type="chain" id="PRO_0000154720" description="Large ribosomal subunit protein uL10">
    <location>
        <begin position="1"/>
        <end position="185"/>
    </location>
</feature>
<feature type="region of interest" description="Disordered" evidence="2">
    <location>
        <begin position="165"/>
        <end position="185"/>
    </location>
</feature>
<gene>
    <name type="primary">rplJ</name>
</gene>
<organism>
    <name type="scientific">Streptomyces griseus</name>
    <dbReference type="NCBI Taxonomy" id="1911"/>
    <lineage>
        <taxon>Bacteria</taxon>
        <taxon>Bacillati</taxon>
        <taxon>Actinomycetota</taxon>
        <taxon>Actinomycetes</taxon>
        <taxon>Kitasatosporales</taxon>
        <taxon>Streptomycetaceae</taxon>
        <taxon>Streptomyces</taxon>
    </lineage>
</organism>
<evidence type="ECO:0000250" key="1"/>
<evidence type="ECO:0000256" key="2">
    <source>
        <dbReference type="SAM" id="MobiDB-lite"/>
    </source>
</evidence>
<evidence type="ECO:0000305" key="3"/>
<name>RL10_STRGR</name>
<comment type="function">
    <text evidence="1">Forms part of the ribosomal stalk, playing a central role in the interaction of the ribosome with GTP-bound translation factors.</text>
</comment>
<comment type="subunit">
    <text evidence="1">Part of the ribosomal stalk of the 50S ribosomal subunit. The N-terminus interacts with L11 and the large rRNA to form the base of the stalk. The C-terminus forms an elongated spine to which L12 dimers bind in a sequential fashion forming a multimeric L10(L12)X complex (By similarity).</text>
</comment>
<comment type="similarity">
    <text evidence="3">Belongs to the universal ribosomal protein uL10 family.</text>
</comment>